<feature type="chain" id="PRO_0000183830" description="Cytochrome c oxidase subunit 3">
    <location>
        <begin position="1"/>
        <end position="261"/>
    </location>
</feature>
<feature type="topological domain" description="Mitochondrial matrix" evidence="1">
    <location>
        <begin position="1"/>
        <end position="15"/>
    </location>
</feature>
<feature type="transmembrane region" description="Helical; Name=I" evidence="1">
    <location>
        <begin position="16"/>
        <end position="34"/>
    </location>
</feature>
<feature type="topological domain" description="Mitochondrial intermembrane" evidence="1">
    <location>
        <begin position="35"/>
        <end position="40"/>
    </location>
</feature>
<feature type="transmembrane region" description="Helical; Name=II" evidence="1">
    <location>
        <begin position="41"/>
        <end position="66"/>
    </location>
</feature>
<feature type="topological domain" description="Mitochondrial matrix" evidence="1">
    <location>
        <begin position="67"/>
        <end position="72"/>
    </location>
</feature>
<feature type="transmembrane region" description="Helical; Name=III" evidence="1">
    <location>
        <begin position="73"/>
        <end position="105"/>
    </location>
</feature>
<feature type="topological domain" description="Mitochondrial intermembrane" evidence="1">
    <location>
        <begin position="106"/>
        <end position="128"/>
    </location>
</feature>
<feature type="transmembrane region" description="Helical; Name=IV" evidence="1">
    <location>
        <begin position="129"/>
        <end position="152"/>
    </location>
</feature>
<feature type="topological domain" description="Mitochondrial matrix" evidence="1">
    <location>
        <begin position="153"/>
        <end position="155"/>
    </location>
</feature>
<feature type="transmembrane region" description="Helical; Name=V" evidence="1">
    <location>
        <begin position="156"/>
        <end position="183"/>
    </location>
</feature>
<feature type="topological domain" description="Mitochondrial intermembrane" evidence="1">
    <location>
        <begin position="184"/>
        <end position="190"/>
    </location>
</feature>
<feature type="transmembrane region" description="Helical; Name=VI" evidence="1">
    <location>
        <begin position="191"/>
        <end position="223"/>
    </location>
</feature>
<feature type="topological domain" description="Mitochondrial matrix" evidence="1">
    <location>
        <begin position="224"/>
        <end position="232"/>
    </location>
</feature>
<feature type="transmembrane region" description="Helical; Name=VII" evidence="1">
    <location>
        <begin position="233"/>
        <end position="256"/>
    </location>
</feature>
<feature type="topological domain" description="Mitochondrial intermembrane" evidence="1">
    <location>
        <begin position="257"/>
        <end position="261"/>
    </location>
</feature>
<geneLocation type="mitochondrion"/>
<gene>
    <name type="primary">MT-CO3</name>
    <name type="synonym">COIII</name>
    <name type="synonym">COXIII</name>
    <name type="synonym">MTCO3</name>
</gene>
<accession>Q00529</accession>
<accession>Q08H13</accession>
<proteinExistence type="inferred from homology"/>
<sequence>MTHQTHAYHMVNPSPWPLTGALSALLMTSGLIMWFHFNSMYLLMLGLTTNTLTMYQWWRDIVRESTFQGHHTPIVQKGLRYGMILFIVSEVFFFAGFFWAFYHSSLAPTPELGGCWPPTGITPLNPMEVPLLNTSVLLASGVSITWAHHSLMEGNRKHMLQALFITISLGIYFTLLQASEYYETPFTISDGIYGSTFFMATGFHGLHVIIGSTFLIVCFVRQLKFHFTSNHHFGFEAAAWYWHFVDVVWLFLYVSIYWWGS</sequence>
<dbReference type="EC" id="7.1.1.9"/>
<dbReference type="EMBL" id="X63726">
    <property type="protein sequence ID" value="CAA45263.1"/>
    <property type="molecule type" value="Genomic_DNA"/>
</dbReference>
<dbReference type="EMBL" id="AM181032">
    <property type="protein sequence ID" value="CAJ57085.1"/>
    <property type="molecule type" value="Genomic_DNA"/>
</dbReference>
<dbReference type="PIR" id="S26157">
    <property type="entry name" value="S26157"/>
</dbReference>
<dbReference type="SMR" id="Q00529"/>
<dbReference type="CTD" id="4514"/>
<dbReference type="OrthoDB" id="13943at33554"/>
<dbReference type="GO" id="GO:0005743">
    <property type="term" value="C:mitochondrial inner membrane"/>
    <property type="evidence" value="ECO:0007669"/>
    <property type="project" value="UniProtKB-SubCell"/>
</dbReference>
<dbReference type="GO" id="GO:0045277">
    <property type="term" value="C:respiratory chain complex IV"/>
    <property type="evidence" value="ECO:0000250"/>
    <property type="project" value="UniProtKB"/>
</dbReference>
<dbReference type="GO" id="GO:0004129">
    <property type="term" value="F:cytochrome-c oxidase activity"/>
    <property type="evidence" value="ECO:0007669"/>
    <property type="project" value="UniProtKB-EC"/>
</dbReference>
<dbReference type="GO" id="GO:0006123">
    <property type="term" value="P:mitochondrial electron transport, cytochrome c to oxygen"/>
    <property type="evidence" value="ECO:0007669"/>
    <property type="project" value="TreeGrafter"/>
</dbReference>
<dbReference type="GO" id="GO:0008535">
    <property type="term" value="P:respiratory chain complex IV assembly"/>
    <property type="evidence" value="ECO:0000250"/>
    <property type="project" value="UniProtKB"/>
</dbReference>
<dbReference type="CDD" id="cd01665">
    <property type="entry name" value="Cyt_c_Oxidase_III"/>
    <property type="match status" value="1"/>
</dbReference>
<dbReference type="FunFam" id="1.10.287.70:FF:000048">
    <property type="entry name" value="Cytochrome c oxidase subunit 3"/>
    <property type="match status" value="1"/>
</dbReference>
<dbReference type="FunFam" id="1.20.120.80:FF:000002">
    <property type="entry name" value="Cytochrome c oxidase subunit 3"/>
    <property type="match status" value="1"/>
</dbReference>
<dbReference type="Gene3D" id="1.10.287.70">
    <property type="match status" value="1"/>
</dbReference>
<dbReference type="Gene3D" id="1.20.120.80">
    <property type="entry name" value="Cytochrome c oxidase, subunit III, four-helix bundle"/>
    <property type="match status" value="1"/>
</dbReference>
<dbReference type="InterPro" id="IPR024791">
    <property type="entry name" value="Cyt_c/ubiquinol_Oxase_su3"/>
</dbReference>
<dbReference type="InterPro" id="IPR033945">
    <property type="entry name" value="Cyt_c_oxase_su3_dom"/>
</dbReference>
<dbReference type="InterPro" id="IPR000298">
    <property type="entry name" value="Cyt_c_oxidase-like_su3"/>
</dbReference>
<dbReference type="InterPro" id="IPR035973">
    <property type="entry name" value="Cyt_c_oxidase_su3-like_sf"/>
</dbReference>
<dbReference type="InterPro" id="IPR013833">
    <property type="entry name" value="Cyt_c_oxidase_su3_a-hlx"/>
</dbReference>
<dbReference type="PANTHER" id="PTHR11403:SF7">
    <property type="entry name" value="CYTOCHROME C OXIDASE SUBUNIT 3"/>
    <property type="match status" value="1"/>
</dbReference>
<dbReference type="PANTHER" id="PTHR11403">
    <property type="entry name" value="CYTOCHROME C OXIDASE SUBUNIT III"/>
    <property type="match status" value="1"/>
</dbReference>
<dbReference type="Pfam" id="PF00510">
    <property type="entry name" value="COX3"/>
    <property type="match status" value="1"/>
</dbReference>
<dbReference type="SUPFAM" id="SSF81452">
    <property type="entry name" value="Cytochrome c oxidase subunit III-like"/>
    <property type="match status" value="1"/>
</dbReference>
<dbReference type="PROSITE" id="PS50253">
    <property type="entry name" value="COX3"/>
    <property type="match status" value="1"/>
</dbReference>
<keyword id="KW-0472">Membrane</keyword>
<keyword id="KW-0496">Mitochondrion</keyword>
<keyword id="KW-0999">Mitochondrion inner membrane</keyword>
<keyword id="KW-1278">Translocase</keyword>
<keyword id="KW-0812">Transmembrane</keyword>
<keyword id="KW-1133">Transmembrane helix</keyword>
<comment type="function">
    <text evidence="2">Component of the cytochrome c oxidase, the last enzyme in the mitochondrial electron transport chain which drives oxidative phosphorylation. The respiratory chain contains 3 multisubunit complexes succinate dehydrogenase (complex II, CII), ubiquinol-cytochrome c oxidoreductase (cytochrome b-c1 complex, complex III, CIII) and cytochrome c oxidase (complex IV, CIV), that cooperate to transfer electrons derived from NADH and succinate to molecular oxygen, creating an electrochemical gradient over the inner membrane that drives transmembrane transport and the ATP synthase. Cytochrome c oxidase is the component of the respiratory chain that catalyzes the reduction of oxygen to water. Electrons originating from reduced cytochrome c in the intermembrane space (IMS) are transferred via the dinuclear copper A center (CU(A)) of subunit 2 and heme A of subunit 1 to the active site in subunit 1, a binuclear center (BNC) formed by heme A3 and copper B (CU(B)). The BNC reduces molecular oxygen to 2 water molecules using 4 electrons from cytochrome c in the IMS and 4 protons from the mitochondrial matrix.</text>
</comment>
<comment type="catalytic activity">
    <reaction evidence="2">
        <text>4 Fe(II)-[cytochrome c] + O2 + 8 H(+)(in) = 4 Fe(III)-[cytochrome c] + 2 H2O + 4 H(+)(out)</text>
        <dbReference type="Rhea" id="RHEA:11436"/>
        <dbReference type="Rhea" id="RHEA-COMP:10350"/>
        <dbReference type="Rhea" id="RHEA-COMP:14399"/>
        <dbReference type="ChEBI" id="CHEBI:15377"/>
        <dbReference type="ChEBI" id="CHEBI:15378"/>
        <dbReference type="ChEBI" id="CHEBI:15379"/>
        <dbReference type="ChEBI" id="CHEBI:29033"/>
        <dbReference type="ChEBI" id="CHEBI:29034"/>
        <dbReference type="EC" id="7.1.1.9"/>
    </reaction>
    <physiologicalReaction direction="left-to-right" evidence="2">
        <dbReference type="Rhea" id="RHEA:11437"/>
    </physiologicalReaction>
</comment>
<comment type="subunit">
    <text evidence="1">Component of the cytochrome c oxidase (complex IV, CIV), a multisubunit enzyme composed of 14 subunits. The complex is composed of a catalytic core of 3 subunits MT-CO1, MT-CO2 and MT-CO3, encoded in the mitochondrial DNA, and 11 supernumerary subunits COX4I, COX5A, COX5B, COX6A, COX6B, COX6C, COX7A, COX7B, COX7C, COX8 and NDUFA4, which are encoded in the nuclear genome. The complex exists as a monomer or a dimer and forms supercomplexes (SCs) in the inner mitochondrial membrane with NADH-ubiquinone oxidoreductase (complex I, CI) and ubiquinol-cytochrome c oxidoreductase (cytochrome b-c1 complex, complex III, CIII), resulting in different assemblies (supercomplex SCI(1)III(2)IV(1) and megacomplex MCI(2)III(2)IV(2)).</text>
</comment>
<comment type="subcellular location">
    <subcellularLocation>
        <location evidence="1">Mitochondrion inner membrane</location>
        <topology evidence="1">Multi-pass membrane protein</topology>
    </subcellularLocation>
</comment>
<comment type="similarity">
    <text evidence="3">Belongs to the cytochrome c oxidase subunit 3 family.</text>
</comment>
<reference key="1">
    <citation type="journal article" date="1992" name="J. Mol. Evol.">
        <title>The complete mitochondrial DNA sequence of the harbor seal, Phoca vitulina.</title>
        <authorList>
            <person name="Arnason U."/>
            <person name="Johnsson E."/>
        </authorList>
    </citation>
    <scope>NUCLEOTIDE SEQUENCE [GENOMIC DNA]</scope>
</reference>
<reference key="2">
    <citation type="journal article" date="2006" name="Mol. Phylogenet. Evol.">
        <title>Pinniped phylogeny and a new hypothesis for their origin and dispersal.</title>
        <authorList>
            <person name="Arnason U."/>
            <person name="Gullberg A."/>
            <person name="Janke A."/>
            <person name="Kullberg M."/>
            <person name="Lehman N."/>
            <person name="Petrov E.A."/>
            <person name="Vainola R."/>
        </authorList>
    </citation>
    <scope>NUCLEOTIDE SEQUENCE [GENOMIC DNA]</scope>
</reference>
<name>COX3_PHOVI</name>
<protein>
    <recommendedName>
        <fullName>Cytochrome c oxidase subunit 3</fullName>
        <ecNumber>7.1.1.9</ecNumber>
    </recommendedName>
    <alternativeName>
        <fullName>Cytochrome c oxidase polypeptide III</fullName>
    </alternativeName>
</protein>
<organism>
    <name type="scientific">Phoca vitulina</name>
    <name type="common">Harbor seal</name>
    <dbReference type="NCBI Taxonomy" id="9720"/>
    <lineage>
        <taxon>Eukaryota</taxon>
        <taxon>Metazoa</taxon>
        <taxon>Chordata</taxon>
        <taxon>Craniata</taxon>
        <taxon>Vertebrata</taxon>
        <taxon>Euteleostomi</taxon>
        <taxon>Mammalia</taxon>
        <taxon>Eutheria</taxon>
        <taxon>Laurasiatheria</taxon>
        <taxon>Carnivora</taxon>
        <taxon>Caniformia</taxon>
        <taxon>Pinnipedia</taxon>
        <taxon>Phocidae</taxon>
        <taxon>Phocinae</taxon>
        <taxon>Phoca</taxon>
    </lineage>
</organism>
<evidence type="ECO:0000250" key="1">
    <source>
        <dbReference type="UniProtKB" id="P00415"/>
    </source>
</evidence>
<evidence type="ECO:0000250" key="2">
    <source>
        <dbReference type="UniProtKB" id="P00420"/>
    </source>
</evidence>
<evidence type="ECO:0000305" key="3"/>